<dbReference type="EC" id="3.2.2.27" evidence="1"/>
<dbReference type="EMBL" id="CP000857">
    <property type="protein sequence ID" value="ACN46859.1"/>
    <property type="molecule type" value="Genomic_DNA"/>
</dbReference>
<dbReference type="RefSeq" id="WP_000179978.1">
    <property type="nucleotide sequence ID" value="NC_012125.1"/>
</dbReference>
<dbReference type="SMR" id="C0PVZ2"/>
<dbReference type="KEGG" id="sei:SPC_2759"/>
<dbReference type="HOGENOM" id="CLU_032162_3_0_6"/>
<dbReference type="Proteomes" id="UP000001599">
    <property type="component" value="Chromosome"/>
</dbReference>
<dbReference type="GO" id="GO:0005737">
    <property type="term" value="C:cytoplasm"/>
    <property type="evidence" value="ECO:0007669"/>
    <property type="project" value="UniProtKB-SubCell"/>
</dbReference>
<dbReference type="GO" id="GO:0004844">
    <property type="term" value="F:uracil DNA N-glycosylase activity"/>
    <property type="evidence" value="ECO:0007669"/>
    <property type="project" value="UniProtKB-UniRule"/>
</dbReference>
<dbReference type="GO" id="GO:0097510">
    <property type="term" value="P:base-excision repair, AP site formation via deaminated base removal"/>
    <property type="evidence" value="ECO:0007669"/>
    <property type="project" value="TreeGrafter"/>
</dbReference>
<dbReference type="CDD" id="cd10027">
    <property type="entry name" value="UDG-F1-like"/>
    <property type="match status" value="1"/>
</dbReference>
<dbReference type="FunFam" id="3.40.470.10:FF:000001">
    <property type="entry name" value="Uracil-DNA glycosylase"/>
    <property type="match status" value="1"/>
</dbReference>
<dbReference type="Gene3D" id="3.40.470.10">
    <property type="entry name" value="Uracil-DNA glycosylase-like domain"/>
    <property type="match status" value="1"/>
</dbReference>
<dbReference type="HAMAP" id="MF_00148">
    <property type="entry name" value="UDG"/>
    <property type="match status" value="1"/>
</dbReference>
<dbReference type="InterPro" id="IPR002043">
    <property type="entry name" value="UDG_fam1"/>
</dbReference>
<dbReference type="InterPro" id="IPR018085">
    <property type="entry name" value="Ura-DNA_Glyclase_AS"/>
</dbReference>
<dbReference type="InterPro" id="IPR005122">
    <property type="entry name" value="Uracil-DNA_glycosylase-like"/>
</dbReference>
<dbReference type="InterPro" id="IPR036895">
    <property type="entry name" value="Uracil-DNA_glycosylase-like_sf"/>
</dbReference>
<dbReference type="NCBIfam" id="NF003588">
    <property type="entry name" value="PRK05254.1-1"/>
    <property type="match status" value="1"/>
</dbReference>
<dbReference type="NCBIfam" id="NF003589">
    <property type="entry name" value="PRK05254.1-2"/>
    <property type="match status" value="1"/>
</dbReference>
<dbReference type="NCBIfam" id="NF003591">
    <property type="entry name" value="PRK05254.1-4"/>
    <property type="match status" value="1"/>
</dbReference>
<dbReference type="NCBIfam" id="NF003592">
    <property type="entry name" value="PRK05254.1-5"/>
    <property type="match status" value="1"/>
</dbReference>
<dbReference type="NCBIfam" id="TIGR00628">
    <property type="entry name" value="ung"/>
    <property type="match status" value="1"/>
</dbReference>
<dbReference type="PANTHER" id="PTHR11264">
    <property type="entry name" value="URACIL-DNA GLYCOSYLASE"/>
    <property type="match status" value="1"/>
</dbReference>
<dbReference type="PANTHER" id="PTHR11264:SF0">
    <property type="entry name" value="URACIL-DNA GLYCOSYLASE"/>
    <property type="match status" value="1"/>
</dbReference>
<dbReference type="Pfam" id="PF03167">
    <property type="entry name" value="UDG"/>
    <property type="match status" value="1"/>
</dbReference>
<dbReference type="SMART" id="SM00986">
    <property type="entry name" value="UDG"/>
    <property type="match status" value="1"/>
</dbReference>
<dbReference type="SMART" id="SM00987">
    <property type="entry name" value="UreE_C"/>
    <property type="match status" value="1"/>
</dbReference>
<dbReference type="SUPFAM" id="SSF52141">
    <property type="entry name" value="Uracil-DNA glycosylase-like"/>
    <property type="match status" value="1"/>
</dbReference>
<dbReference type="PROSITE" id="PS00130">
    <property type="entry name" value="U_DNA_GLYCOSYLASE"/>
    <property type="match status" value="1"/>
</dbReference>
<reference key="1">
    <citation type="journal article" date="2009" name="PLoS ONE">
        <title>Salmonella paratyphi C: genetic divergence from Salmonella choleraesuis and pathogenic convergence with Salmonella typhi.</title>
        <authorList>
            <person name="Liu W.-Q."/>
            <person name="Feng Y."/>
            <person name="Wang Y."/>
            <person name="Zou Q.-H."/>
            <person name="Chen F."/>
            <person name="Guo J.-T."/>
            <person name="Peng Y.-H."/>
            <person name="Jin Y."/>
            <person name="Li Y.-G."/>
            <person name="Hu S.-N."/>
            <person name="Johnston R.N."/>
            <person name="Liu G.-R."/>
            <person name="Liu S.-L."/>
        </authorList>
    </citation>
    <scope>NUCLEOTIDE SEQUENCE [LARGE SCALE GENOMIC DNA]</scope>
    <source>
        <strain>RKS4594</strain>
    </source>
</reference>
<comment type="function">
    <text evidence="1">Excises uracil residues from the DNA which can arise as a result of misincorporation of dUMP residues by DNA polymerase or due to deamination of cytosine.</text>
</comment>
<comment type="catalytic activity">
    <reaction evidence="1">
        <text>Hydrolyzes single-stranded DNA or mismatched double-stranded DNA and polynucleotides, releasing free uracil.</text>
        <dbReference type="EC" id="3.2.2.27"/>
    </reaction>
</comment>
<comment type="subcellular location">
    <subcellularLocation>
        <location evidence="1">Cytoplasm</location>
    </subcellularLocation>
</comment>
<comment type="similarity">
    <text evidence="1">Belongs to the uracil-DNA glycosylase (UDG) superfamily. UNG family.</text>
</comment>
<accession>C0PVZ2</accession>
<name>UNG_SALPC</name>
<feature type="chain" id="PRO_1000199792" description="Uracil-DNA glycosylase">
    <location>
        <begin position="1"/>
        <end position="229"/>
    </location>
</feature>
<feature type="active site" description="Proton acceptor" evidence="1">
    <location>
        <position position="64"/>
    </location>
</feature>
<organism>
    <name type="scientific">Salmonella paratyphi C (strain RKS4594)</name>
    <dbReference type="NCBI Taxonomy" id="476213"/>
    <lineage>
        <taxon>Bacteria</taxon>
        <taxon>Pseudomonadati</taxon>
        <taxon>Pseudomonadota</taxon>
        <taxon>Gammaproteobacteria</taxon>
        <taxon>Enterobacterales</taxon>
        <taxon>Enterobacteriaceae</taxon>
        <taxon>Salmonella</taxon>
    </lineage>
</organism>
<protein>
    <recommendedName>
        <fullName evidence="1">Uracil-DNA glycosylase</fullName>
        <shortName evidence="1">UDG</shortName>
        <ecNumber evidence="1">3.2.2.27</ecNumber>
    </recommendedName>
</protein>
<keyword id="KW-0963">Cytoplasm</keyword>
<keyword id="KW-0227">DNA damage</keyword>
<keyword id="KW-0234">DNA repair</keyword>
<keyword id="KW-0378">Hydrolase</keyword>
<evidence type="ECO:0000255" key="1">
    <source>
        <dbReference type="HAMAP-Rule" id="MF_00148"/>
    </source>
</evidence>
<proteinExistence type="inferred from homology"/>
<sequence>MATELTWHDVLADEKQQPYFINTLHTVAGERQSGITVYPPQKDVFNAFRFTELGDVKVVILGQDPYHGPGQAHGLAFSVRPGIAPPPSLVNMYKELEASIPGFVRPAHGYLESWARQGVLLLNTVLTVRAGQAHSHASLGWETFTDKVISLINQHREGVVFLLWGSHAQKKGAIIDPQRHHILKAPHPSPLSAHRGFFGCNHFALTNQWLEQHGEKTIDWTPVLPAESE</sequence>
<gene>
    <name evidence="1" type="primary">ung</name>
    <name type="ordered locus">SPC_2759</name>
</gene>